<name>MSHA_CORU7</name>
<proteinExistence type="inferred from homology"/>
<dbReference type="EC" id="2.4.1.250" evidence="1"/>
<dbReference type="EMBL" id="AM942444">
    <property type="protein sequence ID" value="CAQ04173.1"/>
    <property type="molecule type" value="Genomic_DNA"/>
</dbReference>
<dbReference type="RefSeq" id="WP_012359479.1">
    <property type="nucleotide sequence ID" value="NC_010545.1"/>
</dbReference>
<dbReference type="SMR" id="B1VEI4"/>
<dbReference type="STRING" id="504474.cu0213"/>
<dbReference type="CAZy" id="GT4">
    <property type="family name" value="Glycosyltransferase Family 4"/>
</dbReference>
<dbReference type="GeneID" id="60605013"/>
<dbReference type="KEGG" id="cur:cu0213"/>
<dbReference type="eggNOG" id="COG0438">
    <property type="taxonomic scope" value="Bacteria"/>
</dbReference>
<dbReference type="HOGENOM" id="CLU_009583_2_3_11"/>
<dbReference type="Proteomes" id="UP000001727">
    <property type="component" value="Chromosome"/>
</dbReference>
<dbReference type="GO" id="GO:0008375">
    <property type="term" value="F:acetylglucosaminyltransferase activity"/>
    <property type="evidence" value="ECO:0007669"/>
    <property type="project" value="UniProtKB-UniRule"/>
</dbReference>
<dbReference type="GO" id="GO:0102710">
    <property type="term" value="F:D-inositol-3-phosphate glycosyltransferase activity"/>
    <property type="evidence" value="ECO:0007669"/>
    <property type="project" value="UniProtKB-EC"/>
</dbReference>
<dbReference type="GO" id="GO:0000287">
    <property type="term" value="F:magnesium ion binding"/>
    <property type="evidence" value="ECO:0007669"/>
    <property type="project" value="UniProtKB-UniRule"/>
</dbReference>
<dbReference type="GO" id="GO:0010125">
    <property type="term" value="P:mycothiol biosynthetic process"/>
    <property type="evidence" value="ECO:0007669"/>
    <property type="project" value="UniProtKB-UniRule"/>
</dbReference>
<dbReference type="Gene3D" id="3.40.50.2000">
    <property type="entry name" value="Glycogen Phosphorylase B"/>
    <property type="match status" value="2"/>
</dbReference>
<dbReference type="HAMAP" id="MF_01695">
    <property type="entry name" value="MshA"/>
    <property type="match status" value="1"/>
</dbReference>
<dbReference type="InterPro" id="IPR001296">
    <property type="entry name" value="Glyco_trans_1"/>
</dbReference>
<dbReference type="InterPro" id="IPR028098">
    <property type="entry name" value="Glyco_trans_4-like_N"/>
</dbReference>
<dbReference type="InterPro" id="IPR017814">
    <property type="entry name" value="Mycothiol_biosynthesis_MshA"/>
</dbReference>
<dbReference type="NCBIfam" id="TIGR03449">
    <property type="entry name" value="mycothiol_MshA"/>
    <property type="match status" value="1"/>
</dbReference>
<dbReference type="PANTHER" id="PTHR12526:SF510">
    <property type="entry name" value="D-INOSITOL 3-PHOSPHATE GLYCOSYLTRANSFERASE"/>
    <property type="match status" value="1"/>
</dbReference>
<dbReference type="PANTHER" id="PTHR12526">
    <property type="entry name" value="GLYCOSYLTRANSFERASE"/>
    <property type="match status" value="1"/>
</dbReference>
<dbReference type="Pfam" id="PF13579">
    <property type="entry name" value="Glyco_trans_4_4"/>
    <property type="match status" value="1"/>
</dbReference>
<dbReference type="Pfam" id="PF00534">
    <property type="entry name" value="Glycos_transf_1"/>
    <property type="match status" value="1"/>
</dbReference>
<dbReference type="SUPFAM" id="SSF53756">
    <property type="entry name" value="UDP-Glycosyltransferase/glycogen phosphorylase"/>
    <property type="match status" value="1"/>
</dbReference>
<protein>
    <recommendedName>
        <fullName>D-inositol 3-phosphate glycosyltransferase</fullName>
        <ecNumber evidence="1">2.4.1.250</ecNumber>
    </recommendedName>
    <alternativeName>
        <fullName evidence="1">N-acetylglucosamine-inositol-phosphate N-acetylglucosaminyltransferase</fullName>
        <shortName evidence="1">GlcNAc-Ins-P N-acetylglucosaminyltransferase</shortName>
    </alternativeName>
</protein>
<reference key="1">
    <citation type="journal article" date="2008" name="J. Biotechnol.">
        <title>The lifestyle of Corynebacterium urealyticum derived from its complete genome sequence established by pyrosequencing.</title>
        <authorList>
            <person name="Tauch A."/>
            <person name="Trost E."/>
            <person name="Tilker A."/>
            <person name="Ludewig U."/>
            <person name="Schneiker S."/>
            <person name="Goesmann A."/>
            <person name="Arnold W."/>
            <person name="Bekel T."/>
            <person name="Brinkrolf K."/>
            <person name="Brune I."/>
            <person name="Goetker S."/>
            <person name="Kalinowski J."/>
            <person name="Kamp P.-B."/>
            <person name="Lobo F.P."/>
            <person name="Viehoever P."/>
            <person name="Weisshaar B."/>
            <person name="Soriano F."/>
            <person name="Droege M."/>
            <person name="Puehler A."/>
        </authorList>
    </citation>
    <scope>NUCLEOTIDE SEQUENCE [LARGE SCALE GENOMIC DNA]</scope>
    <source>
        <strain>ATCC 43042 / DSM 7109</strain>
    </source>
</reference>
<keyword id="KW-0328">Glycosyltransferase</keyword>
<keyword id="KW-0460">Magnesium</keyword>
<keyword id="KW-0479">Metal-binding</keyword>
<keyword id="KW-1185">Reference proteome</keyword>
<keyword id="KW-0808">Transferase</keyword>
<gene>
    <name evidence="1" type="primary">mshA</name>
    <name type="ordered locus">cu0213</name>
</gene>
<organism>
    <name type="scientific">Corynebacterium urealyticum (strain ATCC 43042 / DSM 7109)</name>
    <dbReference type="NCBI Taxonomy" id="504474"/>
    <lineage>
        <taxon>Bacteria</taxon>
        <taxon>Bacillati</taxon>
        <taxon>Actinomycetota</taxon>
        <taxon>Actinomycetes</taxon>
        <taxon>Mycobacteriales</taxon>
        <taxon>Corynebacteriaceae</taxon>
        <taxon>Corynebacterium</taxon>
    </lineage>
</organism>
<evidence type="ECO:0000255" key="1">
    <source>
        <dbReference type="HAMAP-Rule" id="MF_01695"/>
    </source>
</evidence>
<comment type="function">
    <text evidence="1">Catalyzes the transfer of a N-acetyl-glucosamine moiety to 1D-myo-inositol 3-phosphate to produce 1D-myo-inositol 2-acetamido-2-deoxy-glucopyranoside 3-phosphate in the mycothiol biosynthesis pathway.</text>
</comment>
<comment type="catalytic activity">
    <reaction evidence="1">
        <text>1D-myo-inositol 3-phosphate + UDP-N-acetyl-alpha-D-glucosamine = 1D-myo-inositol 2-acetamido-2-deoxy-alpha-D-glucopyranoside 3-phosphate + UDP + H(+)</text>
        <dbReference type="Rhea" id="RHEA:26188"/>
        <dbReference type="ChEBI" id="CHEBI:15378"/>
        <dbReference type="ChEBI" id="CHEBI:57705"/>
        <dbReference type="ChEBI" id="CHEBI:58223"/>
        <dbReference type="ChEBI" id="CHEBI:58401"/>
        <dbReference type="ChEBI" id="CHEBI:58892"/>
        <dbReference type="EC" id="2.4.1.250"/>
    </reaction>
</comment>
<comment type="subunit">
    <text evidence="1">Homodimer.</text>
</comment>
<comment type="similarity">
    <text evidence="1">Belongs to the glycosyltransferase group 1 family. MshA subfamily.</text>
</comment>
<accession>B1VEI4</accession>
<feature type="chain" id="PRO_0000400121" description="D-inositol 3-phosphate glycosyltransferase">
    <location>
        <begin position="1"/>
        <end position="424"/>
    </location>
</feature>
<feature type="binding site" evidence="1">
    <location>
        <position position="9"/>
    </location>
    <ligand>
        <name>1D-myo-inositol 3-phosphate</name>
        <dbReference type="ChEBI" id="CHEBI:58401"/>
    </ligand>
</feature>
<feature type="binding site" evidence="1">
    <location>
        <begin position="20"/>
        <end position="25"/>
    </location>
    <ligand>
        <name>1D-myo-inositol 3-phosphate</name>
        <dbReference type="ChEBI" id="CHEBI:58401"/>
    </ligand>
</feature>
<feature type="binding site" evidence="1">
    <location>
        <position position="23"/>
    </location>
    <ligand>
        <name>UDP-N-acetyl-alpha-D-glucosamine</name>
        <dbReference type="ChEBI" id="CHEBI:57705"/>
    </ligand>
</feature>
<feature type="binding site" evidence="1">
    <location>
        <position position="78"/>
    </location>
    <ligand>
        <name>1D-myo-inositol 3-phosphate</name>
        <dbReference type="ChEBI" id="CHEBI:58401"/>
    </ligand>
</feature>
<feature type="binding site" evidence="1">
    <location>
        <position position="110"/>
    </location>
    <ligand>
        <name>1D-myo-inositol 3-phosphate</name>
        <dbReference type="ChEBI" id="CHEBI:58401"/>
    </ligand>
</feature>
<feature type="binding site" evidence="1">
    <location>
        <position position="134"/>
    </location>
    <ligand>
        <name>1D-myo-inositol 3-phosphate</name>
        <dbReference type="ChEBI" id="CHEBI:58401"/>
    </ligand>
</feature>
<feature type="binding site" evidence="1">
    <location>
        <position position="154"/>
    </location>
    <ligand>
        <name>1D-myo-inositol 3-phosphate</name>
        <dbReference type="ChEBI" id="CHEBI:58401"/>
    </ligand>
</feature>
<feature type="binding site" evidence="1">
    <location>
        <position position="231"/>
    </location>
    <ligand>
        <name>UDP-N-acetyl-alpha-D-glucosamine</name>
        <dbReference type="ChEBI" id="CHEBI:57705"/>
    </ligand>
</feature>
<feature type="binding site" evidence="1">
    <location>
        <position position="236"/>
    </location>
    <ligand>
        <name>UDP-N-acetyl-alpha-D-glucosamine</name>
        <dbReference type="ChEBI" id="CHEBI:57705"/>
    </ligand>
</feature>
<feature type="binding site" evidence="1">
    <location>
        <position position="295"/>
    </location>
    <ligand>
        <name>UDP-N-acetyl-alpha-D-glucosamine</name>
        <dbReference type="ChEBI" id="CHEBI:57705"/>
    </ligand>
</feature>
<feature type="binding site" evidence="1">
    <location>
        <position position="304"/>
    </location>
    <ligand>
        <name>Mg(2+)</name>
        <dbReference type="ChEBI" id="CHEBI:18420"/>
    </ligand>
</feature>
<feature type="binding site" evidence="1">
    <location>
        <position position="305"/>
    </location>
    <ligand>
        <name>Mg(2+)</name>
        <dbReference type="ChEBI" id="CHEBI:18420"/>
    </ligand>
</feature>
<feature type="binding site" evidence="1">
    <location>
        <position position="307"/>
    </location>
    <ligand>
        <name>Mg(2+)</name>
        <dbReference type="ChEBI" id="CHEBI:18420"/>
    </ligand>
</feature>
<feature type="binding site" evidence="1">
    <location>
        <position position="317"/>
    </location>
    <ligand>
        <name>UDP-N-acetyl-alpha-D-glucosamine</name>
        <dbReference type="ChEBI" id="CHEBI:57705"/>
    </ligand>
</feature>
<feature type="binding site" evidence="1">
    <location>
        <position position="325"/>
    </location>
    <ligand>
        <name>UDP-N-acetyl-alpha-D-glucosamine</name>
        <dbReference type="ChEBI" id="CHEBI:57705"/>
    </ligand>
</feature>
<feature type="binding site" evidence="1">
    <location>
        <position position="331"/>
    </location>
    <ligand>
        <name>Mg(2+)</name>
        <dbReference type="ChEBI" id="CHEBI:18420"/>
    </ligand>
</feature>
<sequence>MRIAMISMHTSPLEQAGTGDAGGMNVYIRNTAEQLAKLGLSVDIFTRATRPLQGEVVELGDGVRVINCVAGPYEGLSKEELPTQLAAFTGSVLAFTRQHGLSYDLIHSHYWLSGQVAWLLRDLWNIRWVHTPHTLAAVKNNYLSEGDHREPESRRICEQQIVDNADVLIVNTDAEVADVEEGYDSHKARIAVVTPGADIEKFTPGTERATENARRALGIPLSAKVIGFVGRLQRLKGPHVLLQAAATLIERYPDMPIRVLICGGPSGSGLERPKCLEELAEELGISRAVRFLKPRPPEELVSIYQAADVVAMPSANESFGLVALEAQATGTPVVATRIGGLQAAVAEGKSGLLVDGQDPQAWADALGQLLSDDDQRIAMAEYAPQHAARYSWENTAKQLVELYRSLPTMPEEGPAERHPAGSAN</sequence>